<accession>Q69Q47</accession>
<sequence length="453" mass="50936">MGGEEGMAAGRKKRVGRYEVGRTIGQGTFAKVKFAVDADTGAAVAMKVLDKDTILNHRMLHQIKREISIMKIVRHPNIVRLNEVLAGKTKIYIILELITGGELFDKIARQGKLRENEARKYFQQLIDAINYCHSKGVYHRDLKPENLLLDSRGNLKVSDFGLSTLAQKGVGLLHTTCGTPNYVAPEVLSNNGYDGSAADVWSCGVILYVLMAGYLPFEEDDLPTLYDKITAGQFSCPYWFSPGATSLIHRILDPNPKTRITIEQIREDTWFKKTYVAIKRGEDENVDLDDVQAVFDNIEDKYVSEQVTHNDGGPLVMNAFEMITLSQGLDLSALFDRQQEFVKRQTRFVSRKPAKTIVATIEVVAETMGLKVHSQNYKLRLEGVSSNRMSPFAVVLQVFEVAPSLFMVDVRKVAGDTLEYHRFYKNLCNKMESIIWRPIEVSAKSALLRTATC</sequence>
<name>CIPKO_ORYSJ</name>
<feature type="chain" id="PRO_0000338382" description="CBL-interacting protein kinase 24">
    <location>
        <begin position="1"/>
        <end position="453"/>
    </location>
</feature>
<feature type="domain" description="Protein kinase" evidence="2">
    <location>
        <begin position="18"/>
        <end position="271"/>
    </location>
</feature>
<feature type="domain" description="NAF" evidence="3">
    <location>
        <begin position="310"/>
        <end position="336"/>
    </location>
</feature>
<feature type="region of interest" description="Activation loop" evidence="1">
    <location>
        <begin position="159"/>
        <end position="186"/>
    </location>
</feature>
<feature type="region of interest" description="PPI" evidence="1">
    <location>
        <begin position="343"/>
        <end position="372"/>
    </location>
</feature>
<feature type="active site" description="Proton acceptor" evidence="2 4">
    <location>
        <position position="141"/>
    </location>
</feature>
<feature type="binding site" evidence="2">
    <location>
        <begin position="24"/>
        <end position="32"/>
    </location>
    <ligand>
        <name>ATP</name>
        <dbReference type="ChEBI" id="CHEBI:30616"/>
    </ligand>
</feature>
<feature type="binding site" evidence="2">
    <location>
        <position position="47"/>
    </location>
    <ligand>
        <name>ATP</name>
        <dbReference type="ChEBI" id="CHEBI:30616"/>
    </ligand>
</feature>
<feature type="sequence conflict" description="In Ref. 4; AK102270." evidence="7" ref="4">
    <original>M</original>
    <variation>V</variation>
    <location>
        <position position="317"/>
    </location>
</feature>
<dbReference type="EC" id="2.7.11.1"/>
<dbReference type="EMBL" id="AP003629">
    <property type="protein sequence ID" value="BAD35545.1"/>
    <property type="molecule type" value="Genomic_DNA"/>
</dbReference>
<dbReference type="EMBL" id="AP005446">
    <property type="protein sequence ID" value="BAD36106.1"/>
    <property type="molecule type" value="Genomic_DNA"/>
</dbReference>
<dbReference type="EMBL" id="AP008212">
    <property type="protein sequence ID" value="BAF19938.1"/>
    <property type="molecule type" value="Genomic_DNA"/>
</dbReference>
<dbReference type="EMBL" id="AP014962">
    <property type="protein sequence ID" value="BAS98528.1"/>
    <property type="molecule type" value="Genomic_DNA"/>
</dbReference>
<dbReference type="EMBL" id="AK102270">
    <property type="status" value="NOT_ANNOTATED_CDS"/>
    <property type="molecule type" value="mRNA"/>
</dbReference>
<dbReference type="RefSeq" id="XP_015643084.1">
    <property type="nucleotide sequence ID" value="XM_015787598.1"/>
</dbReference>
<dbReference type="SMR" id="Q69Q47"/>
<dbReference type="FunCoup" id="Q69Q47">
    <property type="interactions" value="588"/>
</dbReference>
<dbReference type="STRING" id="39947.Q69Q47"/>
<dbReference type="PaxDb" id="39947-Q69Q47"/>
<dbReference type="EnsemblPlants" id="Os06t0606000-01">
    <property type="protein sequence ID" value="Os06t0606000-01"/>
    <property type="gene ID" value="Os06g0606000"/>
</dbReference>
<dbReference type="Gramene" id="Os06t0606000-01">
    <property type="protein sequence ID" value="Os06t0606000-01"/>
    <property type="gene ID" value="Os06g0606000"/>
</dbReference>
<dbReference type="KEGG" id="dosa:Os06g0606000"/>
<dbReference type="eggNOG" id="KOG0583">
    <property type="taxonomic scope" value="Eukaryota"/>
</dbReference>
<dbReference type="HOGENOM" id="CLU_000288_59_0_1"/>
<dbReference type="InParanoid" id="Q69Q47"/>
<dbReference type="OMA" id="QIREDTW"/>
<dbReference type="OrthoDB" id="193931at2759"/>
<dbReference type="Proteomes" id="UP000000763">
    <property type="component" value="Chromosome 6"/>
</dbReference>
<dbReference type="Proteomes" id="UP000059680">
    <property type="component" value="Chromosome 6"/>
</dbReference>
<dbReference type="ExpressionAtlas" id="Q69Q47">
    <property type="expression patterns" value="baseline and differential"/>
</dbReference>
<dbReference type="GO" id="GO:0005524">
    <property type="term" value="F:ATP binding"/>
    <property type="evidence" value="ECO:0007669"/>
    <property type="project" value="UniProtKB-KW"/>
</dbReference>
<dbReference type="GO" id="GO:0106310">
    <property type="term" value="F:protein serine kinase activity"/>
    <property type="evidence" value="ECO:0007669"/>
    <property type="project" value="RHEA"/>
</dbReference>
<dbReference type="GO" id="GO:0004674">
    <property type="term" value="F:protein serine/threonine kinase activity"/>
    <property type="evidence" value="ECO:0000318"/>
    <property type="project" value="GO_Central"/>
</dbReference>
<dbReference type="GO" id="GO:0007165">
    <property type="term" value="P:signal transduction"/>
    <property type="evidence" value="ECO:0007669"/>
    <property type="project" value="InterPro"/>
</dbReference>
<dbReference type="CDD" id="cd12195">
    <property type="entry name" value="CIPK_C"/>
    <property type="match status" value="1"/>
</dbReference>
<dbReference type="FunFam" id="1.10.510.10:FF:000279">
    <property type="entry name" value="Non-specific serine/threonine protein kinase"/>
    <property type="match status" value="1"/>
</dbReference>
<dbReference type="FunFam" id="3.30.200.20:FF:000096">
    <property type="entry name" value="Non-specific serine/threonine protein kinase"/>
    <property type="match status" value="1"/>
</dbReference>
<dbReference type="FunFam" id="3.30.310.80:FF:000002">
    <property type="entry name" value="Non-specific serine/threonine protein kinase"/>
    <property type="match status" value="1"/>
</dbReference>
<dbReference type="Gene3D" id="3.30.310.80">
    <property type="entry name" value="Kinase associated domain 1, KA1"/>
    <property type="match status" value="1"/>
</dbReference>
<dbReference type="Gene3D" id="3.30.200.20">
    <property type="entry name" value="Phosphorylase Kinase, domain 1"/>
    <property type="match status" value="1"/>
</dbReference>
<dbReference type="Gene3D" id="1.10.510.10">
    <property type="entry name" value="Transferase(Phosphotransferase) domain 1"/>
    <property type="match status" value="1"/>
</dbReference>
<dbReference type="InterPro" id="IPR011009">
    <property type="entry name" value="Kinase-like_dom_sf"/>
</dbReference>
<dbReference type="InterPro" id="IPR018451">
    <property type="entry name" value="NAF/FISL_domain"/>
</dbReference>
<dbReference type="InterPro" id="IPR004041">
    <property type="entry name" value="NAF_dom"/>
</dbReference>
<dbReference type="InterPro" id="IPR000719">
    <property type="entry name" value="Prot_kinase_dom"/>
</dbReference>
<dbReference type="InterPro" id="IPR017441">
    <property type="entry name" value="Protein_kinase_ATP_BS"/>
</dbReference>
<dbReference type="InterPro" id="IPR008271">
    <property type="entry name" value="Ser/Thr_kinase_AS"/>
</dbReference>
<dbReference type="PANTHER" id="PTHR43895">
    <property type="entry name" value="CALCIUM/CALMODULIN-DEPENDENT PROTEIN KINASE KINASE-RELATED"/>
    <property type="match status" value="1"/>
</dbReference>
<dbReference type="PANTHER" id="PTHR43895:SF32">
    <property type="entry name" value="SERINE_THREONINE-PROTEIN KINASE CHK1"/>
    <property type="match status" value="1"/>
</dbReference>
<dbReference type="Pfam" id="PF03822">
    <property type="entry name" value="NAF"/>
    <property type="match status" value="1"/>
</dbReference>
<dbReference type="Pfam" id="PF00069">
    <property type="entry name" value="Pkinase"/>
    <property type="match status" value="1"/>
</dbReference>
<dbReference type="SMART" id="SM00220">
    <property type="entry name" value="S_TKc"/>
    <property type="match status" value="1"/>
</dbReference>
<dbReference type="SUPFAM" id="SSF56112">
    <property type="entry name" value="Protein kinase-like (PK-like)"/>
    <property type="match status" value="1"/>
</dbReference>
<dbReference type="PROSITE" id="PS50816">
    <property type="entry name" value="NAF"/>
    <property type="match status" value="1"/>
</dbReference>
<dbReference type="PROSITE" id="PS00107">
    <property type="entry name" value="PROTEIN_KINASE_ATP"/>
    <property type="match status" value="1"/>
</dbReference>
<dbReference type="PROSITE" id="PS50011">
    <property type="entry name" value="PROTEIN_KINASE_DOM"/>
    <property type="match status" value="1"/>
</dbReference>
<dbReference type="PROSITE" id="PS00108">
    <property type="entry name" value="PROTEIN_KINASE_ST"/>
    <property type="match status" value="1"/>
</dbReference>
<comment type="function">
    <text evidence="5">Involved in the regulatory pathway for the control of intracellular Na(+) and K(+) homeostasis and salt tolerance. Operates in synergy with CBL4 to activate the plasma membrane Na(+)/H(+) antiporter SOS1. CIPK serine-threonine protein kinases interact with CBL proteins. Binding of a CBL protein to the regulatory NAF domain of CIPK protein lead to the activation of the kinase in a calcium-dependent manner.</text>
</comment>
<comment type="catalytic activity">
    <reaction>
        <text>L-seryl-[protein] + ATP = O-phospho-L-seryl-[protein] + ADP + H(+)</text>
        <dbReference type="Rhea" id="RHEA:17989"/>
        <dbReference type="Rhea" id="RHEA-COMP:9863"/>
        <dbReference type="Rhea" id="RHEA-COMP:11604"/>
        <dbReference type="ChEBI" id="CHEBI:15378"/>
        <dbReference type="ChEBI" id="CHEBI:29999"/>
        <dbReference type="ChEBI" id="CHEBI:30616"/>
        <dbReference type="ChEBI" id="CHEBI:83421"/>
        <dbReference type="ChEBI" id="CHEBI:456216"/>
        <dbReference type="EC" id="2.7.11.1"/>
    </reaction>
</comment>
<comment type="catalytic activity">
    <reaction>
        <text>L-threonyl-[protein] + ATP = O-phospho-L-threonyl-[protein] + ADP + H(+)</text>
        <dbReference type="Rhea" id="RHEA:46608"/>
        <dbReference type="Rhea" id="RHEA-COMP:11060"/>
        <dbReference type="Rhea" id="RHEA-COMP:11605"/>
        <dbReference type="ChEBI" id="CHEBI:15378"/>
        <dbReference type="ChEBI" id="CHEBI:30013"/>
        <dbReference type="ChEBI" id="CHEBI:30616"/>
        <dbReference type="ChEBI" id="CHEBI:61977"/>
        <dbReference type="ChEBI" id="CHEBI:456216"/>
        <dbReference type="EC" id="2.7.11.1"/>
    </reaction>
</comment>
<comment type="cofactor">
    <cofactor evidence="1">
        <name>Mn(2+)</name>
        <dbReference type="ChEBI" id="CHEBI:29035"/>
    </cofactor>
</comment>
<comment type="subunit">
    <text evidence="5">Interacts with CBL4.</text>
</comment>
<comment type="induction">
    <text evidence="6">By drought stress and abscisic acid (ABA).</text>
</comment>
<comment type="domain">
    <text evidence="1">The activation loop within the kinase domain is the target of phosphorylation/activation by upstream protein kinases. The PPI motif mediates the interaction with the ABI (abscisic acid-insensitive) phosphatases (By similarity).</text>
</comment>
<comment type="similarity">
    <text evidence="7">Belongs to the protein kinase superfamily. CAMK Ser/Thr protein kinase family. SNF1 subfamily.</text>
</comment>
<protein>
    <recommendedName>
        <fullName>CBL-interacting protein kinase 24</fullName>
        <ecNumber>2.7.11.1</ecNumber>
    </recommendedName>
    <alternativeName>
        <fullName>OsCIPK24</fullName>
    </alternativeName>
</protein>
<keyword id="KW-0067">ATP-binding</keyword>
<keyword id="KW-0418">Kinase</keyword>
<keyword id="KW-0464">Manganese</keyword>
<keyword id="KW-0547">Nucleotide-binding</keyword>
<keyword id="KW-1185">Reference proteome</keyword>
<keyword id="KW-0723">Serine/threonine-protein kinase</keyword>
<keyword id="KW-0808">Transferase</keyword>
<organism>
    <name type="scientific">Oryza sativa subsp. japonica</name>
    <name type="common">Rice</name>
    <dbReference type="NCBI Taxonomy" id="39947"/>
    <lineage>
        <taxon>Eukaryota</taxon>
        <taxon>Viridiplantae</taxon>
        <taxon>Streptophyta</taxon>
        <taxon>Embryophyta</taxon>
        <taxon>Tracheophyta</taxon>
        <taxon>Spermatophyta</taxon>
        <taxon>Magnoliopsida</taxon>
        <taxon>Liliopsida</taxon>
        <taxon>Poales</taxon>
        <taxon>Poaceae</taxon>
        <taxon>BOP clade</taxon>
        <taxon>Oryzoideae</taxon>
        <taxon>Oryzeae</taxon>
        <taxon>Oryzinae</taxon>
        <taxon>Oryza</taxon>
        <taxon>Oryza sativa</taxon>
    </lineage>
</organism>
<reference key="1">
    <citation type="journal article" date="2005" name="Nature">
        <title>The map-based sequence of the rice genome.</title>
        <authorList>
            <consortium name="International rice genome sequencing project (IRGSP)"/>
        </authorList>
    </citation>
    <scope>NUCLEOTIDE SEQUENCE [LARGE SCALE GENOMIC DNA]</scope>
    <source>
        <strain>cv. Nipponbare</strain>
    </source>
</reference>
<reference key="2">
    <citation type="journal article" date="2008" name="Nucleic Acids Res.">
        <title>The rice annotation project database (RAP-DB): 2008 update.</title>
        <authorList>
            <consortium name="The rice annotation project (RAP)"/>
        </authorList>
    </citation>
    <scope>GENOME REANNOTATION</scope>
    <source>
        <strain>cv. Nipponbare</strain>
    </source>
</reference>
<reference key="3">
    <citation type="journal article" date="2013" name="Rice">
        <title>Improvement of the Oryza sativa Nipponbare reference genome using next generation sequence and optical map data.</title>
        <authorList>
            <person name="Kawahara Y."/>
            <person name="de la Bastide M."/>
            <person name="Hamilton J.P."/>
            <person name="Kanamori H."/>
            <person name="McCombie W.R."/>
            <person name="Ouyang S."/>
            <person name="Schwartz D.C."/>
            <person name="Tanaka T."/>
            <person name="Wu J."/>
            <person name="Zhou S."/>
            <person name="Childs K.L."/>
            <person name="Davidson R.M."/>
            <person name="Lin H."/>
            <person name="Quesada-Ocampo L."/>
            <person name="Vaillancourt B."/>
            <person name="Sakai H."/>
            <person name="Lee S.S."/>
            <person name="Kim J."/>
            <person name="Numa H."/>
            <person name="Itoh T."/>
            <person name="Buell C.R."/>
            <person name="Matsumoto T."/>
        </authorList>
    </citation>
    <scope>GENOME REANNOTATION</scope>
    <source>
        <strain>cv. Nipponbare</strain>
    </source>
</reference>
<reference key="4">
    <citation type="journal article" date="2003" name="Science">
        <title>Collection, mapping, and annotation of over 28,000 cDNA clones from japonica rice.</title>
        <authorList>
            <consortium name="The rice full-length cDNA consortium"/>
        </authorList>
    </citation>
    <scope>NUCLEOTIDE SEQUENCE [LARGE SCALE MRNA]</scope>
    <source>
        <strain>cv. Nipponbare</strain>
    </source>
</reference>
<reference key="5">
    <citation type="journal article" date="2004" name="Plant Physiol.">
        <title>Calcium sensors and their interacting protein kinases: genomics of the Arabidopsis and rice CBL-CIPK signaling networks.</title>
        <authorList>
            <person name="Kolukisaoglu U."/>
            <person name="Weinl S."/>
            <person name="Blazevic D."/>
            <person name="Batistic O."/>
            <person name="Kudla J."/>
        </authorList>
    </citation>
    <scope>GENE FAMILY</scope>
    <scope>NOMENCLATURE</scope>
</reference>
<reference key="6">
    <citation type="journal article" date="2007" name="Plant Physiol.">
        <title>Conservation of the salt overly sensitive pathway in rice.</title>
        <authorList>
            <person name="Martinez-Atienza J."/>
            <person name="Jiang X."/>
            <person name="Garciadeblas B."/>
            <person name="Mendoza I."/>
            <person name="Zhu J.-K."/>
            <person name="Pardo J.M."/>
            <person name="Quintero F.J."/>
        </authorList>
    </citation>
    <scope>FUNCTION</scope>
    <scope>INTERACTION WITH CBL4</scope>
</reference>
<reference key="7">
    <citation type="journal article" date="2007" name="Plant Physiol.">
        <title>Characterization of stress-responsive CIPK genes in rice for stress tolerance improvement.</title>
        <authorList>
            <person name="Xiang Y."/>
            <person name="Huang Y."/>
            <person name="Xiong L."/>
        </authorList>
    </citation>
    <scope>INDUCTION</scope>
</reference>
<gene>
    <name type="primary">CIPK24</name>
    <name type="ordered locus">Os06g0606000</name>
    <name type="ordered locus">LOC_Os06g40370</name>
    <name type="ORF">P0029C06.1</name>
    <name type="ORF">P0481H08.35</name>
</gene>
<evidence type="ECO:0000250" key="1"/>
<evidence type="ECO:0000255" key="2">
    <source>
        <dbReference type="PROSITE-ProRule" id="PRU00159"/>
    </source>
</evidence>
<evidence type="ECO:0000255" key="3">
    <source>
        <dbReference type="PROSITE-ProRule" id="PRU00256"/>
    </source>
</evidence>
<evidence type="ECO:0000255" key="4">
    <source>
        <dbReference type="PROSITE-ProRule" id="PRU10027"/>
    </source>
</evidence>
<evidence type="ECO:0000269" key="5">
    <source>
    </source>
</evidence>
<evidence type="ECO:0000269" key="6">
    <source>
    </source>
</evidence>
<evidence type="ECO:0000305" key="7"/>
<proteinExistence type="evidence at protein level"/>